<accession>Q5QV44</accession>
<reference key="1">
    <citation type="journal article" date="2004" name="Proc. Natl. Acad. Sci. U.S.A.">
        <title>Genome sequence of the deep-sea gamma-proteobacterium Idiomarina loihiensis reveals amino acid fermentation as a source of carbon and energy.</title>
        <authorList>
            <person name="Hou S."/>
            <person name="Saw J.H."/>
            <person name="Lee K.S."/>
            <person name="Freitas T.A."/>
            <person name="Belisle C."/>
            <person name="Kawarabayasi Y."/>
            <person name="Donachie S.P."/>
            <person name="Pikina A."/>
            <person name="Galperin M.Y."/>
            <person name="Koonin E.V."/>
            <person name="Makarova K.S."/>
            <person name="Omelchenko M.V."/>
            <person name="Sorokin A."/>
            <person name="Wolf Y.I."/>
            <person name="Li Q.X."/>
            <person name="Keum Y.S."/>
            <person name="Campbell S."/>
            <person name="Denery J."/>
            <person name="Aizawa S."/>
            <person name="Shibata S."/>
            <person name="Malahoff A."/>
            <person name="Alam M."/>
        </authorList>
    </citation>
    <scope>NUCLEOTIDE SEQUENCE [LARGE SCALE GENOMIC DNA]</scope>
    <source>
        <strain>ATCC BAA-735 / DSM 15497 / L2-TR</strain>
    </source>
</reference>
<keyword id="KW-0479">Metal-binding</keyword>
<keyword id="KW-1185">Reference proteome</keyword>
<keyword id="KW-0687">Ribonucleoprotein</keyword>
<keyword id="KW-0689">Ribosomal protein</keyword>
<keyword id="KW-0694">RNA-binding</keyword>
<keyword id="KW-0699">rRNA-binding</keyword>
<keyword id="KW-0862">Zinc</keyword>
<gene>
    <name evidence="1" type="primary">rpmE</name>
    <name type="ordered locus">IL2462</name>
</gene>
<comment type="function">
    <text evidence="1">Binds the 23S rRNA.</text>
</comment>
<comment type="cofactor">
    <cofactor evidence="1">
        <name>Zn(2+)</name>
        <dbReference type="ChEBI" id="CHEBI:29105"/>
    </cofactor>
    <text evidence="1">Binds 1 zinc ion per subunit.</text>
</comment>
<comment type="subunit">
    <text evidence="1">Part of the 50S ribosomal subunit.</text>
</comment>
<comment type="similarity">
    <text evidence="1">Belongs to the bacterial ribosomal protein bL31 family. Type A subfamily.</text>
</comment>
<evidence type="ECO:0000255" key="1">
    <source>
        <dbReference type="HAMAP-Rule" id="MF_00501"/>
    </source>
</evidence>
<evidence type="ECO:0000305" key="2"/>
<sequence>MKQGIHPKYETLKVSCSCGHTFETRSTRSEDLHLDVCSECHPFYTGKQRVMDTGGRVDKFKKRFGALGKKDS</sequence>
<dbReference type="EMBL" id="AE017340">
    <property type="protein sequence ID" value="AAV83294.1"/>
    <property type="molecule type" value="Genomic_DNA"/>
</dbReference>
<dbReference type="RefSeq" id="WP_011235687.1">
    <property type="nucleotide sequence ID" value="NC_006512.1"/>
</dbReference>
<dbReference type="SMR" id="Q5QV44"/>
<dbReference type="STRING" id="283942.IL2462"/>
<dbReference type="GeneID" id="41337656"/>
<dbReference type="KEGG" id="ilo:IL2462"/>
<dbReference type="eggNOG" id="COG0254">
    <property type="taxonomic scope" value="Bacteria"/>
</dbReference>
<dbReference type="HOGENOM" id="CLU_114306_4_3_6"/>
<dbReference type="OrthoDB" id="9803251at2"/>
<dbReference type="Proteomes" id="UP000001171">
    <property type="component" value="Chromosome"/>
</dbReference>
<dbReference type="GO" id="GO:1990904">
    <property type="term" value="C:ribonucleoprotein complex"/>
    <property type="evidence" value="ECO:0007669"/>
    <property type="project" value="UniProtKB-KW"/>
</dbReference>
<dbReference type="GO" id="GO:0005840">
    <property type="term" value="C:ribosome"/>
    <property type="evidence" value="ECO:0007669"/>
    <property type="project" value="UniProtKB-KW"/>
</dbReference>
<dbReference type="GO" id="GO:0046872">
    <property type="term" value="F:metal ion binding"/>
    <property type="evidence" value="ECO:0007669"/>
    <property type="project" value="UniProtKB-KW"/>
</dbReference>
<dbReference type="GO" id="GO:0019843">
    <property type="term" value="F:rRNA binding"/>
    <property type="evidence" value="ECO:0007669"/>
    <property type="project" value="UniProtKB-KW"/>
</dbReference>
<dbReference type="GO" id="GO:0003735">
    <property type="term" value="F:structural constituent of ribosome"/>
    <property type="evidence" value="ECO:0007669"/>
    <property type="project" value="InterPro"/>
</dbReference>
<dbReference type="GO" id="GO:0006412">
    <property type="term" value="P:translation"/>
    <property type="evidence" value="ECO:0007669"/>
    <property type="project" value="UniProtKB-UniRule"/>
</dbReference>
<dbReference type="Gene3D" id="4.10.830.30">
    <property type="entry name" value="Ribosomal protein L31"/>
    <property type="match status" value="1"/>
</dbReference>
<dbReference type="HAMAP" id="MF_00501">
    <property type="entry name" value="Ribosomal_bL31_1"/>
    <property type="match status" value="1"/>
</dbReference>
<dbReference type="InterPro" id="IPR034704">
    <property type="entry name" value="Ribosomal_bL28/bL31-like_sf"/>
</dbReference>
<dbReference type="InterPro" id="IPR002150">
    <property type="entry name" value="Ribosomal_bL31"/>
</dbReference>
<dbReference type="InterPro" id="IPR027491">
    <property type="entry name" value="Ribosomal_bL31_A"/>
</dbReference>
<dbReference type="InterPro" id="IPR042105">
    <property type="entry name" value="Ribosomal_bL31_sf"/>
</dbReference>
<dbReference type="NCBIfam" id="TIGR00105">
    <property type="entry name" value="L31"/>
    <property type="match status" value="1"/>
</dbReference>
<dbReference type="NCBIfam" id="NF000612">
    <property type="entry name" value="PRK00019.1"/>
    <property type="match status" value="1"/>
</dbReference>
<dbReference type="NCBIfam" id="NF001809">
    <property type="entry name" value="PRK00528.1"/>
    <property type="match status" value="1"/>
</dbReference>
<dbReference type="PANTHER" id="PTHR33280">
    <property type="entry name" value="50S RIBOSOMAL PROTEIN L31, CHLOROPLASTIC"/>
    <property type="match status" value="1"/>
</dbReference>
<dbReference type="PANTHER" id="PTHR33280:SF6">
    <property type="entry name" value="LARGE RIBOSOMAL SUBUNIT PROTEIN BL31A"/>
    <property type="match status" value="1"/>
</dbReference>
<dbReference type="Pfam" id="PF01197">
    <property type="entry name" value="Ribosomal_L31"/>
    <property type="match status" value="1"/>
</dbReference>
<dbReference type="PRINTS" id="PR01249">
    <property type="entry name" value="RIBOSOMALL31"/>
</dbReference>
<dbReference type="SUPFAM" id="SSF143800">
    <property type="entry name" value="L28p-like"/>
    <property type="match status" value="1"/>
</dbReference>
<dbReference type="PROSITE" id="PS01143">
    <property type="entry name" value="RIBOSOMAL_L31"/>
    <property type="match status" value="1"/>
</dbReference>
<feature type="chain" id="PRO_0000173117" description="Large ribosomal subunit protein bL31">
    <location>
        <begin position="1"/>
        <end position="72"/>
    </location>
</feature>
<feature type="binding site" evidence="1">
    <location>
        <position position="16"/>
    </location>
    <ligand>
        <name>Zn(2+)</name>
        <dbReference type="ChEBI" id="CHEBI:29105"/>
    </ligand>
</feature>
<feature type="binding site" evidence="1">
    <location>
        <position position="18"/>
    </location>
    <ligand>
        <name>Zn(2+)</name>
        <dbReference type="ChEBI" id="CHEBI:29105"/>
    </ligand>
</feature>
<feature type="binding site" evidence="1">
    <location>
        <position position="37"/>
    </location>
    <ligand>
        <name>Zn(2+)</name>
        <dbReference type="ChEBI" id="CHEBI:29105"/>
    </ligand>
</feature>
<feature type="binding site" evidence="1">
    <location>
        <position position="40"/>
    </location>
    <ligand>
        <name>Zn(2+)</name>
        <dbReference type="ChEBI" id="CHEBI:29105"/>
    </ligand>
</feature>
<proteinExistence type="inferred from homology"/>
<organism>
    <name type="scientific">Idiomarina loihiensis (strain ATCC BAA-735 / DSM 15497 / L2-TR)</name>
    <dbReference type="NCBI Taxonomy" id="283942"/>
    <lineage>
        <taxon>Bacteria</taxon>
        <taxon>Pseudomonadati</taxon>
        <taxon>Pseudomonadota</taxon>
        <taxon>Gammaproteobacteria</taxon>
        <taxon>Alteromonadales</taxon>
        <taxon>Idiomarinaceae</taxon>
        <taxon>Idiomarina</taxon>
    </lineage>
</organism>
<protein>
    <recommendedName>
        <fullName evidence="1">Large ribosomal subunit protein bL31</fullName>
    </recommendedName>
    <alternativeName>
        <fullName evidence="2">50S ribosomal protein L31</fullName>
    </alternativeName>
</protein>
<name>RL31_IDILO</name>